<dbReference type="EC" id="3.1.26.-" evidence="1"/>
<dbReference type="EMBL" id="AP008955">
    <property type="protein sequence ID" value="BAH41176.1"/>
    <property type="molecule type" value="Genomic_DNA"/>
</dbReference>
<dbReference type="RefSeq" id="WP_007716204.1">
    <property type="nucleotide sequence ID" value="NC_012491.1"/>
</dbReference>
<dbReference type="SMR" id="C0ZIF8"/>
<dbReference type="STRING" id="358681.BBR47_01990"/>
<dbReference type="KEGG" id="bbe:BBR47_01990"/>
<dbReference type="eggNOG" id="COG1939">
    <property type="taxonomic scope" value="Bacteria"/>
</dbReference>
<dbReference type="HOGENOM" id="CLU_091169_2_1_9"/>
<dbReference type="Proteomes" id="UP000001877">
    <property type="component" value="Chromosome"/>
</dbReference>
<dbReference type="GO" id="GO:0005737">
    <property type="term" value="C:cytoplasm"/>
    <property type="evidence" value="ECO:0007669"/>
    <property type="project" value="UniProtKB-SubCell"/>
</dbReference>
<dbReference type="GO" id="GO:0004525">
    <property type="term" value="F:ribonuclease III activity"/>
    <property type="evidence" value="ECO:0007669"/>
    <property type="project" value="InterPro"/>
</dbReference>
<dbReference type="GO" id="GO:0019843">
    <property type="term" value="F:rRNA binding"/>
    <property type="evidence" value="ECO:0007669"/>
    <property type="project" value="UniProtKB-UniRule"/>
</dbReference>
<dbReference type="GO" id="GO:0006364">
    <property type="term" value="P:rRNA processing"/>
    <property type="evidence" value="ECO:0007669"/>
    <property type="project" value="UniProtKB-UniRule"/>
</dbReference>
<dbReference type="CDD" id="cd00593">
    <property type="entry name" value="RIBOc"/>
    <property type="match status" value="1"/>
</dbReference>
<dbReference type="Gene3D" id="1.10.1520.10">
    <property type="entry name" value="Ribonuclease III domain"/>
    <property type="match status" value="1"/>
</dbReference>
<dbReference type="HAMAP" id="MF_01468">
    <property type="entry name" value="RNase_Mini_III"/>
    <property type="match status" value="1"/>
</dbReference>
<dbReference type="InterPro" id="IPR008226">
    <property type="entry name" value="Mini3_fam"/>
</dbReference>
<dbReference type="InterPro" id="IPR000999">
    <property type="entry name" value="RNase_III_dom"/>
</dbReference>
<dbReference type="InterPro" id="IPR036389">
    <property type="entry name" value="RNase_III_sf"/>
</dbReference>
<dbReference type="PANTHER" id="PTHR34276">
    <property type="entry name" value="MINI-RIBONUCLEASE 3"/>
    <property type="match status" value="1"/>
</dbReference>
<dbReference type="PANTHER" id="PTHR34276:SF1">
    <property type="entry name" value="MINI-RIBONUCLEASE 3"/>
    <property type="match status" value="1"/>
</dbReference>
<dbReference type="Pfam" id="PF00636">
    <property type="entry name" value="Ribonuclease_3"/>
    <property type="match status" value="1"/>
</dbReference>
<dbReference type="PIRSF" id="PIRSF005520">
    <property type="entry name" value="UCP005520"/>
    <property type="match status" value="1"/>
</dbReference>
<dbReference type="SMART" id="SM00535">
    <property type="entry name" value="RIBOc"/>
    <property type="match status" value="1"/>
</dbReference>
<dbReference type="SUPFAM" id="SSF69065">
    <property type="entry name" value="RNase III domain-like"/>
    <property type="match status" value="1"/>
</dbReference>
<reference key="1">
    <citation type="submission" date="2005-03" db="EMBL/GenBank/DDBJ databases">
        <title>Brevibacillus brevis strain 47, complete genome.</title>
        <authorList>
            <person name="Hosoyama A."/>
            <person name="Yamada R."/>
            <person name="Hongo Y."/>
            <person name="Terui Y."/>
            <person name="Ankai A."/>
            <person name="Masuyama W."/>
            <person name="Sekiguchi M."/>
            <person name="Takeda T."/>
            <person name="Asano K."/>
            <person name="Ohji S."/>
            <person name="Ichikawa N."/>
            <person name="Narita S."/>
            <person name="Aoki N."/>
            <person name="Miura H."/>
            <person name="Matsushita S."/>
            <person name="Sekigawa T."/>
            <person name="Yamagata H."/>
            <person name="Yoshikawa H."/>
            <person name="Udaka S."/>
            <person name="Tanikawa S."/>
            <person name="Fujita N."/>
        </authorList>
    </citation>
    <scope>NUCLEOTIDE SEQUENCE [LARGE SCALE GENOMIC DNA]</scope>
    <source>
        <strain>47 / JCM 6285 / NBRC 100599</strain>
    </source>
</reference>
<comment type="function">
    <text evidence="1">Involved in correct processing of both the 5' and 3' ends of 23S rRNA precursor. Processes 30S rRNA precursor transcript even in absence of ribonuclease 3 (Rnc); Rnc processes 30S rRNA into smaller rRNA precursors.</text>
</comment>
<comment type="cofactor">
    <cofactor evidence="1">
        <name>Mg(2+)</name>
        <dbReference type="ChEBI" id="CHEBI:18420"/>
    </cofactor>
</comment>
<comment type="subunit">
    <text evidence="1">Homodimer.</text>
</comment>
<comment type="subcellular location">
    <subcellularLocation>
        <location evidence="1">Cytoplasm</location>
    </subcellularLocation>
</comment>
<comment type="similarity">
    <text evidence="1">Belongs to the MrnC RNase family.</text>
</comment>
<name>MRNC_BREBN</name>
<proteinExistence type="inferred from homology"/>
<gene>
    <name evidence="1" type="primary">mrnC</name>
    <name type="ordered locus">BBR47_01990</name>
</gene>
<accession>C0ZIF8</accession>
<evidence type="ECO:0000255" key="1">
    <source>
        <dbReference type="HAMAP-Rule" id="MF_01468"/>
    </source>
</evidence>
<sequence>MQKEELTRDPNLTNPLVLAFLGDATYSHCVRYHLIAKGLVKPNQLHKAANRYVSAKAQANVLLTLMPTLPEEELNVVKRGRNAKSGSSAKNADIIDYRHATAFEALIGYLYLSGKEERIAEIVQQAFAIVEGES</sequence>
<protein>
    <recommendedName>
        <fullName evidence="1">Mini-ribonuclease 3</fullName>
        <shortName evidence="1">Mini-3</shortName>
        <shortName evidence="1">Mini-RNase 3</shortName>
        <ecNumber evidence="1">3.1.26.-</ecNumber>
    </recommendedName>
    <alternativeName>
        <fullName evidence="1">Mini-RNase III</fullName>
        <shortName evidence="1">Mini-III</shortName>
    </alternativeName>
</protein>
<feature type="chain" id="PRO_0000415981" description="Mini-ribonuclease 3">
    <location>
        <begin position="1"/>
        <end position="134"/>
    </location>
</feature>
<feature type="active site" evidence="1">
    <location>
        <position position="23"/>
    </location>
</feature>
<organism>
    <name type="scientific">Brevibacillus brevis (strain 47 / JCM 6285 / NBRC 100599)</name>
    <dbReference type="NCBI Taxonomy" id="358681"/>
    <lineage>
        <taxon>Bacteria</taxon>
        <taxon>Bacillati</taxon>
        <taxon>Bacillota</taxon>
        <taxon>Bacilli</taxon>
        <taxon>Bacillales</taxon>
        <taxon>Paenibacillaceae</taxon>
        <taxon>Brevibacillus</taxon>
    </lineage>
</organism>
<keyword id="KW-0963">Cytoplasm</keyword>
<keyword id="KW-0255">Endonuclease</keyword>
<keyword id="KW-0378">Hydrolase</keyword>
<keyword id="KW-0460">Magnesium</keyword>
<keyword id="KW-0540">Nuclease</keyword>
<keyword id="KW-1185">Reference proteome</keyword>
<keyword id="KW-0690">Ribosome biogenesis</keyword>
<keyword id="KW-0694">RNA-binding</keyword>
<keyword id="KW-0698">rRNA processing</keyword>
<keyword id="KW-0699">rRNA-binding</keyword>